<organism>
    <name type="scientific">Burkholderia mallei (strain NCTC 10229)</name>
    <dbReference type="NCBI Taxonomy" id="412022"/>
    <lineage>
        <taxon>Bacteria</taxon>
        <taxon>Pseudomonadati</taxon>
        <taxon>Pseudomonadota</taxon>
        <taxon>Betaproteobacteria</taxon>
        <taxon>Burkholderiales</taxon>
        <taxon>Burkholderiaceae</taxon>
        <taxon>Burkholderia</taxon>
        <taxon>pseudomallei group</taxon>
    </lineage>
</organism>
<protein>
    <recommendedName>
        <fullName evidence="1">HPr kinase/phosphorylase</fullName>
        <shortName evidence="1">HPrK/P</shortName>
        <ecNumber evidence="1">2.7.11.-</ecNumber>
        <ecNumber evidence="1">2.7.4.-</ecNumber>
    </recommendedName>
    <alternativeName>
        <fullName evidence="1">HPr(Ser) kinase/phosphorylase</fullName>
    </alternativeName>
</protein>
<comment type="function">
    <text evidence="1">Catalyzes the ATP- as well as the pyrophosphate-dependent phosphorylation of a specific serine residue in HPr, a phosphocarrier protein of the phosphoenolpyruvate-dependent sugar phosphotransferase system (PTS). HprK/P also catalyzes the pyrophosphate-producing, inorganic phosphate-dependent dephosphorylation (phosphorolysis) of seryl-phosphorylated HPr (P-Ser-HPr).</text>
</comment>
<comment type="catalytic activity">
    <reaction evidence="1">
        <text>[HPr protein]-L-serine + ATP = [HPr protein]-O-phospho-L-serine + ADP + H(+)</text>
        <dbReference type="Rhea" id="RHEA:46600"/>
        <dbReference type="Rhea" id="RHEA-COMP:11602"/>
        <dbReference type="Rhea" id="RHEA-COMP:11603"/>
        <dbReference type="ChEBI" id="CHEBI:15378"/>
        <dbReference type="ChEBI" id="CHEBI:29999"/>
        <dbReference type="ChEBI" id="CHEBI:30616"/>
        <dbReference type="ChEBI" id="CHEBI:83421"/>
        <dbReference type="ChEBI" id="CHEBI:456216"/>
    </reaction>
</comment>
<comment type="catalytic activity">
    <reaction evidence="1">
        <text>[HPr protein]-O-phospho-L-serine + phosphate + H(+) = [HPr protein]-L-serine + diphosphate</text>
        <dbReference type="Rhea" id="RHEA:46604"/>
        <dbReference type="Rhea" id="RHEA-COMP:11602"/>
        <dbReference type="Rhea" id="RHEA-COMP:11603"/>
        <dbReference type="ChEBI" id="CHEBI:15378"/>
        <dbReference type="ChEBI" id="CHEBI:29999"/>
        <dbReference type="ChEBI" id="CHEBI:33019"/>
        <dbReference type="ChEBI" id="CHEBI:43474"/>
        <dbReference type="ChEBI" id="CHEBI:83421"/>
    </reaction>
</comment>
<comment type="cofactor">
    <cofactor evidence="1">
        <name>Mg(2+)</name>
        <dbReference type="ChEBI" id="CHEBI:18420"/>
    </cofactor>
</comment>
<comment type="subunit">
    <text evidence="1">Homohexamer.</text>
</comment>
<comment type="domain">
    <text evidence="1">The Walker A ATP-binding motif also binds Pi and PPi.</text>
</comment>
<comment type="miscellaneous">
    <text evidence="1">Both phosphorylation and phosphorolysis are carried out by the same active site and suggest a common mechanism for both reactions.</text>
</comment>
<comment type="similarity">
    <text evidence="1">Belongs to the HPrK/P family.</text>
</comment>
<gene>
    <name evidence="1" type="primary">hprK</name>
    <name type="ordered locus">BMA10229_A1511</name>
</gene>
<reference key="1">
    <citation type="journal article" date="2010" name="Genome Biol. Evol.">
        <title>Continuing evolution of Burkholderia mallei through genome reduction and large-scale rearrangements.</title>
        <authorList>
            <person name="Losada L."/>
            <person name="Ronning C.M."/>
            <person name="DeShazer D."/>
            <person name="Woods D."/>
            <person name="Fedorova N."/>
            <person name="Kim H.S."/>
            <person name="Shabalina S.A."/>
            <person name="Pearson T.R."/>
            <person name="Brinkac L."/>
            <person name="Tan P."/>
            <person name="Nandi T."/>
            <person name="Crabtree J."/>
            <person name="Badger J."/>
            <person name="Beckstrom-Sternberg S."/>
            <person name="Saqib M."/>
            <person name="Schutzer S.E."/>
            <person name="Keim P."/>
            <person name="Nierman W.C."/>
        </authorList>
    </citation>
    <scope>NUCLEOTIDE SEQUENCE [LARGE SCALE GENOMIC DNA]</scope>
    <source>
        <strain>NCTC 10229</strain>
    </source>
</reference>
<sequence>MDTSSINAQSIFDDNAAMLKLSWLTGHEGWERGFSADTVANATSSADLVGHLNLIHPNRIQVLGEAEIDYYQRQTDEDRSRHMAELIALEPPFLVVAGGAAAPPELVLRCTRSSTPLFTTPMSAAAVIDSLRLYMSRILAPRATLHGVFLDILGMGVLLTGDSGLGKSELGLELISRGHGLVADDAVDFVRLGPDFVEGRCPPLLQNLLEVRGLGLLDIKTIFGETAVRRKMKLKLIVQLVRRPDGEFQRLPLESQTVDVLGLPISKVTIQVAAGRNLAVLVEAAVRNTILQLRGIDTLRDFMDRQRLAMQDPDSQFPGKLV</sequence>
<accession>A2S6C4</accession>
<name>HPRK_BURM9</name>
<dbReference type="EC" id="2.7.11.-" evidence="1"/>
<dbReference type="EC" id="2.7.4.-" evidence="1"/>
<dbReference type="EMBL" id="CP000546">
    <property type="protein sequence ID" value="ABN02228.1"/>
    <property type="molecule type" value="Genomic_DNA"/>
</dbReference>
<dbReference type="RefSeq" id="WP_004195225.1">
    <property type="nucleotide sequence ID" value="NC_008836.1"/>
</dbReference>
<dbReference type="SMR" id="A2S6C4"/>
<dbReference type="GeneID" id="93059051"/>
<dbReference type="KEGG" id="bml:BMA10229_A1511"/>
<dbReference type="HOGENOM" id="CLU_052030_0_2_4"/>
<dbReference type="Proteomes" id="UP000002283">
    <property type="component" value="Chromosome I"/>
</dbReference>
<dbReference type="GO" id="GO:0005524">
    <property type="term" value="F:ATP binding"/>
    <property type="evidence" value="ECO:0007669"/>
    <property type="project" value="UniProtKB-UniRule"/>
</dbReference>
<dbReference type="GO" id="GO:0000287">
    <property type="term" value="F:magnesium ion binding"/>
    <property type="evidence" value="ECO:0007669"/>
    <property type="project" value="UniProtKB-UniRule"/>
</dbReference>
<dbReference type="GO" id="GO:0000155">
    <property type="term" value="F:phosphorelay sensor kinase activity"/>
    <property type="evidence" value="ECO:0007669"/>
    <property type="project" value="InterPro"/>
</dbReference>
<dbReference type="GO" id="GO:0004674">
    <property type="term" value="F:protein serine/threonine kinase activity"/>
    <property type="evidence" value="ECO:0007669"/>
    <property type="project" value="UniProtKB-KW"/>
</dbReference>
<dbReference type="GO" id="GO:0004712">
    <property type="term" value="F:protein serine/threonine/tyrosine kinase activity"/>
    <property type="evidence" value="ECO:0007669"/>
    <property type="project" value="UniProtKB-UniRule"/>
</dbReference>
<dbReference type="GO" id="GO:0006109">
    <property type="term" value="P:regulation of carbohydrate metabolic process"/>
    <property type="evidence" value="ECO:0007669"/>
    <property type="project" value="UniProtKB-UniRule"/>
</dbReference>
<dbReference type="CDD" id="cd01918">
    <property type="entry name" value="HprK_C"/>
    <property type="match status" value="1"/>
</dbReference>
<dbReference type="FunFam" id="3.40.50.300:FF:000174">
    <property type="entry name" value="HPr kinase/phosphorylase"/>
    <property type="match status" value="1"/>
</dbReference>
<dbReference type="Gene3D" id="3.40.1390.20">
    <property type="entry name" value="HprK N-terminal domain-like"/>
    <property type="match status" value="1"/>
</dbReference>
<dbReference type="Gene3D" id="3.40.50.300">
    <property type="entry name" value="P-loop containing nucleotide triphosphate hydrolases"/>
    <property type="match status" value="1"/>
</dbReference>
<dbReference type="HAMAP" id="MF_01249">
    <property type="entry name" value="HPr_kinase"/>
    <property type="match status" value="1"/>
</dbReference>
<dbReference type="InterPro" id="IPR003755">
    <property type="entry name" value="HPr(Ser)_kin/Pase"/>
</dbReference>
<dbReference type="InterPro" id="IPR011104">
    <property type="entry name" value="Hpr_kin/Pase_C"/>
</dbReference>
<dbReference type="InterPro" id="IPR011126">
    <property type="entry name" value="Hpr_kin/Pase_Hpr_N"/>
</dbReference>
<dbReference type="InterPro" id="IPR027417">
    <property type="entry name" value="P-loop_NTPase"/>
</dbReference>
<dbReference type="InterPro" id="IPR028979">
    <property type="entry name" value="Ser_kin/Pase_Hpr-like_N_sf"/>
</dbReference>
<dbReference type="NCBIfam" id="TIGR00679">
    <property type="entry name" value="hpr-ser"/>
    <property type="match status" value="1"/>
</dbReference>
<dbReference type="PANTHER" id="PTHR30305:SF1">
    <property type="entry name" value="HPR KINASE_PHOSPHORYLASE"/>
    <property type="match status" value="1"/>
</dbReference>
<dbReference type="PANTHER" id="PTHR30305">
    <property type="entry name" value="PROTEIN YJDM-RELATED"/>
    <property type="match status" value="1"/>
</dbReference>
<dbReference type="Pfam" id="PF07475">
    <property type="entry name" value="Hpr_kinase_C"/>
    <property type="match status" value="1"/>
</dbReference>
<dbReference type="Pfam" id="PF02603">
    <property type="entry name" value="Hpr_kinase_N"/>
    <property type="match status" value="1"/>
</dbReference>
<dbReference type="SUPFAM" id="SSF75138">
    <property type="entry name" value="HprK N-terminal domain-like"/>
    <property type="match status" value="1"/>
</dbReference>
<dbReference type="SUPFAM" id="SSF53795">
    <property type="entry name" value="PEP carboxykinase-like"/>
    <property type="match status" value="1"/>
</dbReference>
<feature type="chain" id="PRO_1000067131" description="HPr kinase/phosphorylase">
    <location>
        <begin position="1"/>
        <end position="322"/>
    </location>
</feature>
<feature type="region of interest" description="Important for the catalytic mechanism of both phosphorylation and dephosphorylation" evidence="1">
    <location>
        <begin position="209"/>
        <end position="218"/>
    </location>
</feature>
<feature type="region of interest" description="Important for the catalytic mechanism of dephosphorylation" evidence="1">
    <location>
        <begin position="271"/>
        <end position="276"/>
    </location>
</feature>
<feature type="active site" evidence="1">
    <location>
        <position position="146"/>
    </location>
</feature>
<feature type="active site" evidence="1">
    <location>
        <position position="167"/>
    </location>
</feature>
<feature type="active site" description="Proton acceptor; for phosphorylation activity. Proton donor; for dephosphorylation activity" evidence="1">
    <location>
        <position position="185"/>
    </location>
</feature>
<feature type="active site" evidence="1">
    <location>
        <position position="250"/>
    </location>
</feature>
<feature type="binding site" evidence="1">
    <location>
        <begin position="161"/>
        <end position="168"/>
    </location>
    <ligand>
        <name>ATP</name>
        <dbReference type="ChEBI" id="CHEBI:30616"/>
    </ligand>
</feature>
<feature type="binding site" evidence="1">
    <location>
        <position position="168"/>
    </location>
    <ligand>
        <name>Mg(2+)</name>
        <dbReference type="ChEBI" id="CHEBI:18420"/>
    </ligand>
</feature>
<feature type="binding site" evidence="1">
    <location>
        <position position="210"/>
    </location>
    <ligand>
        <name>Mg(2+)</name>
        <dbReference type="ChEBI" id="CHEBI:18420"/>
    </ligand>
</feature>
<proteinExistence type="inferred from homology"/>
<keyword id="KW-0067">ATP-binding</keyword>
<keyword id="KW-0418">Kinase</keyword>
<keyword id="KW-0460">Magnesium</keyword>
<keyword id="KW-0479">Metal-binding</keyword>
<keyword id="KW-0511">Multifunctional enzyme</keyword>
<keyword id="KW-0547">Nucleotide-binding</keyword>
<keyword id="KW-0723">Serine/threonine-protein kinase</keyword>
<keyword id="KW-0808">Transferase</keyword>
<evidence type="ECO:0000255" key="1">
    <source>
        <dbReference type="HAMAP-Rule" id="MF_01249"/>
    </source>
</evidence>